<feature type="chain" id="PRO_1000055117" description="ATP synthase subunit beta">
    <location>
        <begin position="1"/>
        <end position="503"/>
    </location>
</feature>
<feature type="binding site" evidence="1">
    <location>
        <begin position="157"/>
        <end position="164"/>
    </location>
    <ligand>
        <name>ATP</name>
        <dbReference type="ChEBI" id="CHEBI:30616"/>
    </ligand>
</feature>
<name>ATPB_CHRFK</name>
<keyword id="KW-0066">ATP synthesis</keyword>
<keyword id="KW-0067">ATP-binding</keyword>
<keyword id="KW-1003">Cell membrane</keyword>
<keyword id="KW-0139">CF(1)</keyword>
<keyword id="KW-0375">Hydrogen ion transport</keyword>
<keyword id="KW-0406">Ion transport</keyword>
<keyword id="KW-0472">Membrane</keyword>
<keyword id="KW-0547">Nucleotide-binding</keyword>
<keyword id="KW-1278">Translocase</keyword>
<keyword id="KW-0813">Transport</keyword>
<organism>
    <name type="scientific">Christiangramia forsetii (strain DSM 17595 / CGMCC 1.15422 / KT0803)</name>
    <name type="common">Gramella forsetii</name>
    <dbReference type="NCBI Taxonomy" id="411154"/>
    <lineage>
        <taxon>Bacteria</taxon>
        <taxon>Pseudomonadati</taxon>
        <taxon>Bacteroidota</taxon>
        <taxon>Flavobacteriia</taxon>
        <taxon>Flavobacteriales</taxon>
        <taxon>Flavobacteriaceae</taxon>
        <taxon>Christiangramia</taxon>
    </lineage>
</organism>
<reference key="1">
    <citation type="journal article" date="2006" name="Environ. Microbiol.">
        <title>Whole genome analysis of the marine Bacteroidetes'Gramella forsetii' reveals adaptations to degradation of polymeric organic matter.</title>
        <authorList>
            <person name="Bauer M."/>
            <person name="Kube M."/>
            <person name="Teeling H."/>
            <person name="Richter M."/>
            <person name="Lombardot T."/>
            <person name="Allers E."/>
            <person name="Wuerdemann C.A."/>
            <person name="Quast C."/>
            <person name="Kuhl H."/>
            <person name="Knaust F."/>
            <person name="Woebken D."/>
            <person name="Bischof K."/>
            <person name="Mussmann M."/>
            <person name="Choudhuri J.V."/>
            <person name="Meyer F."/>
            <person name="Reinhardt R."/>
            <person name="Amann R.I."/>
            <person name="Gloeckner F.O."/>
        </authorList>
    </citation>
    <scope>NUCLEOTIDE SEQUENCE [LARGE SCALE GENOMIC DNA]</scope>
    <source>
        <strain>DSM 17595 / CGMCC 1.15422 / KT0803</strain>
    </source>
</reference>
<dbReference type="EC" id="7.1.2.2" evidence="1"/>
<dbReference type="EMBL" id="CU207366">
    <property type="protein sequence ID" value="CAL68486.1"/>
    <property type="molecule type" value="Genomic_DNA"/>
</dbReference>
<dbReference type="RefSeq" id="WP_011711387.1">
    <property type="nucleotide sequence ID" value="NC_008571.1"/>
</dbReference>
<dbReference type="SMR" id="A0M791"/>
<dbReference type="STRING" id="411154.GFO_3548"/>
<dbReference type="KEGG" id="gfo:GFO_3548"/>
<dbReference type="eggNOG" id="COG0055">
    <property type="taxonomic scope" value="Bacteria"/>
</dbReference>
<dbReference type="HOGENOM" id="CLU_022398_0_2_10"/>
<dbReference type="OrthoDB" id="9801639at2"/>
<dbReference type="Proteomes" id="UP000000755">
    <property type="component" value="Chromosome"/>
</dbReference>
<dbReference type="GO" id="GO:0005886">
    <property type="term" value="C:plasma membrane"/>
    <property type="evidence" value="ECO:0007669"/>
    <property type="project" value="UniProtKB-SubCell"/>
</dbReference>
<dbReference type="GO" id="GO:0045259">
    <property type="term" value="C:proton-transporting ATP synthase complex"/>
    <property type="evidence" value="ECO:0007669"/>
    <property type="project" value="UniProtKB-KW"/>
</dbReference>
<dbReference type="GO" id="GO:0005524">
    <property type="term" value="F:ATP binding"/>
    <property type="evidence" value="ECO:0007669"/>
    <property type="project" value="UniProtKB-UniRule"/>
</dbReference>
<dbReference type="GO" id="GO:0016887">
    <property type="term" value="F:ATP hydrolysis activity"/>
    <property type="evidence" value="ECO:0007669"/>
    <property type="project" value="InterPro"/>
</dbReference>
<dbReference type="GO" id="GO:0046933">
    <property type="term" value="F:proton-transporting ATP synthase activity, rotational mechanism"/>
    <property type="evidence" value="ECO:0007669"/>
    <property type="project" value="UniProtKB-UniRule"/>
</dbReference>
<dbReference type="CDD" id="cd18110">
    <property type="entry name" value="ATP-synt_F1_beta_C"/>
    <property type="match status" value="1"/>
</dbReference>
<dbReference type="CDD" id="cd18115">
    <property type="entry name" value="ATP-synt_F1_beta_N"/>
    <property type="match status" value="1"/>
</dbReference>
<dbReference type="CDD" id="cd01133">
    <property type="entry name" value="F1-ATPase_beta_CD"/>
    <property type="match status" value="1"/>
</dbReference>
<dbReference type="FunFam" id="1.10.1140.10:FF:000001">
    <property type="entry name" value="ATP synthase subunit beta"/>
    <property type="match status" value="1"/>
</dbReference>
<dbReference type="FunFam" id="3.40.50.300:FF:000004">
    <property type="entry name" value="ATP synthase subunit beta"/>
    <property type="match status" value="1"/>
</dbReference>
<dbReference type="Gene3D" id="2.40.10.170">
    <property type="match status" value="1"/>
</dbReference>
<dbReference type="Gene3D" id="1.10.1140.10">
    <property type="entry name" value="Bovine Mitochondrial F1-atpase, Atp Synthase Beta Chain, Chain D, domain 3"/>
    <property type="match status" value="1"/>
</dbReference>
<dbReference type="Gene3D" id="3.40.50.300">
    <property type="entry name" value="P-loop containing nucleotide triphosphate hydrolases"/>
    <property type="match status" value="1"/>
</dbReference>
<dbReference type="HAMAP" id="MF_01347">
    <property type="entry name" value="ATP_synth_beta_bact"/>
    <property type="match status" value="1"/>
</dbReference>
<dbReference type="InterPro" id="IPR003593">
    <property type="entry name" value="AAA+_ATPase"/>
</dbReference>
<dbReference type="InterPro" id="IPR055190">
    <property type="entry name" value="ATP-synt_VA_C"/>
</dbReference>
<dbReference type="InterPro" id="IPR005722">
    <property type="entry name" value="ATP_synth_F1_bsu"/>
</dbReference>
<dbReference type="InterPro" id="IPR020003">
    <property type="entry name" value="ATPase_a/bsu_AS"/>
</dbReference>
<dbReference type="InterPro" id="IPR050053">
    <property type="entry name" value="ATPase_alpha/beta_chains"/>
</dbReference>
<dbReference type="InterPro" id="IPR004100">
    <property type="entry name" value="ATPase_F1/V1/A1_a/bsu_N"/>
</dbReference>
<dbReference type="InterPro" id="IPR036121">
    <property type="entry name" value="ATPase_F1/V1/A1_a/bsu_N_sf"/>
</dbReference>
<dbReference type="InterPro" id="IPR000194">
    <property type="entry name" value="ATPase_F1/V1/A1_a/bsu_nucl-bd"/>
</dbReference>
<dbReference type="InterPro" id="IPR024034">
    <property type="entry name" value="ATPase_F1/V1_b/a_C"/>
</dbReference>
<dbReference type="InterPro" id="IPR027417">
    <property type="entry name" value="P-loop_NTPase"/>
</dbReference>
<dbReference type="NCBIfam" id="TIGR01039">
    <property type="entry name" value="atpD"/>
    <property type="match status" value="1"/>
</dbReference>
<dbReference type="PANTHER" id="PTHR15184">
    <property type="entry name" value="ATP SYNTHASE"/>
    <property type="match status" value="1"/>
</dbReference>
<dbReference type="PANTHER" id="PTHR15184:SF71">
    <property type="entry name" value="ATP SYNTHASE SUBUNIT BETA, MITOCHONDRIAL"/>
    <property type="match status" value="1"/>
</dbReference>
<dbReference type="Pfam" id="PF00006">
    <property type="entry name" value="ATP-synt_ab"/>
    <property type="match status" value="1"/>
</dbReference>
<dbReference type="Pfam" id="PF02874">
    <property type="entry name" value="ATP-synt_ab_N"/>
    <property type="match status" value="1"/>
</dbReference>
<dbReference type="Pfam" id="PF22919">
    <property type="entry name" value="ATP-synt_VA_C"/>
    <property type="match status" value="1"/>
</dbReference>
<dbReference type="SMART" id="SM00382">
    <property type="entry name" value="AAA"/>
    <property type="match status" value="1"/>
</dbReference>
<dbReference type="SUPFAM" id="SSF47917">
    <property type="entry name" value="C-terminal domain of alpha and beta subunits of F1 ATP synthase"/>
    <property type="match status" value="1"/>
</dbReference>
<dbReference type="SUPFAM" id="SSF50615">
    <property type="entry name" value="N-terminal domain of alpha and beta subunits of F1 ATP synthase"/>
    <property type="match status" value="1"/>
</dbReference>
<dbReference type="SUPFAM" id="SSF52540">
    <property type="entry name" value="P-loop containing nucleoside triphosphate hydrolases"/>
    <property type="match status" value="1"/>
</dbReference>
<dbReference type="PROSITE" id="PS00152">
    <property type="entry name" value="ATPASE_ALPHA_BETA"/>
    <property type="match status" value="1"/>
</dbReference>
<sequence>MSKVTGKVAQIIGPVVDVVFDSENAELPKIYDSLEITRKDGSILVLEVQSHIGEQTVRTVSMDSTDGLSRGVDVLATGNPIQMPVGKDVYGRLFNVIGDAIDGLGNLPKAGEDGLPIHRQAPKFEDLSVSTEVLFTGIKVIDLIEPYSKGGKIGLFGGAGVGKTVLIQELINNIAKGHGGLSVFAGVGERTREGNDLLREMLESGIIKYGDDFMHSMEEGGWDLQKVDKEVMKESKATFVFGQMNEPPGARARVALSGLTIAEYFRDGAGEGQGKDVLFFVDNIFRFTQAGSEVSALLGRMPSAVGYQPTLATEMGAMQERITSTKNGSITSVQAVYVPADDLTDPAPATTFAHLDATTVLSRKIAELGIYPAVDPLDSTSRILTADILGDEHYDCAQRVKELLQRYKELQDIIAILGMEELSEEDKLAVSRARRVQRFLSQPFHVAEQFTGLKGVLVDIKDTIKGFNMIMDGELDKYPEAAFNLKGTIEEAIEAGEKMLAEN</sequence>
<accession>A0M791</accession>
<comment type="function">
    <text evidence="1">Produces ATP from ADP in the presence of a proton gradient across the membrane. The catalytic sites are hosted primarily by the beta subunits.</text>
</comment>
<comment type="catalytic activity">
    <reaction evidence="1">
        <text>ATP + H2O + 4 H(+)(in) = ADP + phosphate + 5 H(+)(out)</text>
        <dbReference type="Rhea" id="RHEA:57720"/>
        <dbReference type="ChEBI" id="CHEBI:15377"/>
        <dbReference type="ChEBI" id="CHEBI:15378"/>
        <dbReference type="ChEBI" id="CHEBI:30616"/>
        <dbReference type="ChEBI" id="CHEBI:43474"/>
        <dbReference type="ChEBI" id="CHEBI:456216"/>
        <dbReference type="EC" id="7.1.2.2"/>
    </reaction>
</comment>
<comment type="subunit">
    <text evidence="1">F-type ATPases have 2 components, CF(1) - the catalytic core - and CF(0) - the membrane proton channel. CF(1) has five subunits: alpha(3), beta(3), gamma(1), delta(1), epsilon(1). CF(0) has three main subunits: a(1), b(2) and c(9-12). The alpha and beta chains form an alternating ring which encloses part of the gamma chain. CF(1) is attached to CF(0) by a central stalk formed by the gamma and epsilon chains, while a peripheral stalk is formed by the delta and b chains.</text>
</comment>
<comment type="subcellular location">
    <subcellularLocation>
        <location evidence="1">Cell membrane</location>
        <topology evidence="1">Peripheral membrane protein</topology>
    </subcellularLocation>
</comment>
<comment type="similarity">
    <text evidence="1">Belongs to the ATPase alpha/beta chains family.</text>
</comment>
<evidence type="ECO:0000255" key="1">
    <source>
        <dbReference type="HAMAP-Rule" id="MF_01347"/>
    </source>
</evidence>
<protein>
    <recommendedName>
        <fullName evidence="1">ATP synthase subunit beta</fullName>
        <ecNumber evidence="1">7.1.2.2</ecNumber>
    </recommendedName>
    <alternativeName>
        <fullName evidence="1">ATP synthase F1 sector subunit beta</fullName>
    </alternativeName>
    <alternativeName>
        <fullName evidence="1">F-ATPase subunit beta</fullName>
    </alternativeName>
</protein>
<gene>
    <name evidence="1" type="primary">atpD</name>
    <name type="ordered locus">GFO_3548</name>
</gene>
<proteinExistence type="inferred from homology"/>